<keyword id="KW-0175">Coiled coil</keyword>
<keyword id="KW-0597">Phosphoprotein</keyword>
<keyword id="KW-0691">RNA editing</keyword>
<keyword id="KW-0693">Viral RNA replication</keyword>
<sequence length="596" mass="66409">MENNAKDNQIMDSWEEGSGDKSSDISSALDIIEFILSTDSQENTADSNEVNTGNKRLSTTIYQLESKTTETSKENSGSVNENRQLGASHERATETKNRNVNQETIQGGNRGRSSSDSRAEIMVTRGISRSSPDPNNGTQIQESIDYNEVGEMDKDSAKREMRQSKDVPVKVSRSDAIPPTKQDGNGDDGRSMESISTFDSGYTSIVTAATLDDEEELLMKNTRPKRYQSTPQEDDKGIKKGVGKPEDTNKQSPILDYELNSKGSKRNQKTLKISTTTGESTRPQSGSQGKRITSWNILNSESGSRTESTSQNSQIPTSGKSNTVGPGRTTLESRIKTQKTDGKEREDTEESTRFTERAITLLQNLGVIQSAAKLDLYQDKRVVCVANVLNNADTASKIDFLAGLMIGVSMDHDTKLNQIQNEILSLKTDLKKMDESHRRLIENQKEQLSLITSLISNLKIMTERGGKKDQPENSGRTPMIKTKAKEEKIKKVRFDPLMETQGIEKNIPDLYRSIEKTPENDIQIKSDINRSNDESNATRLVPKRTSNTMRSLIIIINNSNLSSRAKQSYINELKLCKSDEEVSELMDMFNEDVSSQ</sequence>
<name>PHOSP_PI3B</name>
<organism>
    <name type="scientific">Bovine parainfluenza 3 virus</name>
    <name type="common">BPIV-3</name>
    <dbReference type="NCBI Taxonomy" id="3052729"/>
    <lineage>
        <taxon>Viruses</taxon>
        <taxon>Riboviria</taxon>
        <taxon>Orthornavirae</taxon>
        <taxon>Negarnaviricota</taxon>
        <taxon>Haploviricotina</taxon>
        <taxon>Monjiviricetes</taxon>
        <taxon>Mononegavirales</taxon>
        <taxon>Paramyxoviridae</taxon>
        <taxon>Feraresvirinae</taxon>
        <taxon>Respirovirus</taxon>
    </lineage>
</organism>
<organismHost>
    <name type="scientific">Bos taurus</name>
    <name type="common">Bovine</name>
    <dbReference type="NCBI Taxonomy" id="9913"/>
</organismHost>
<evidence type="ECO:0000250" key="1">
    <source>
        <dbReference type="UniProtKB" id="P04859"/>
    </source>
</evidence>
<evidence type="ECO:0000250" key="2">
    <source>
        <dbReference type="UniProtKB" id="P06162"/>
    </source>
</evidence>
<evidence type="ECO:0000250" key="3">
    <source>
        <dbReference type="UniProtKB" id="Q77M42"/>
    </source>
</evidence>
<evidence type="ECO:0000255" key="4"/>
<evidence type="ECO:0000256" key="5">
    <source>
        <dbReference type="SAM" id="MobiDB-lite"/>
    </source>
</evidence>
<evidence type="ECO:0000269" key="6">
    <source>
    </source>
</evidence>
<evidence type="ECO:0000305" key="7"/>
<protein>
    <recommendedName>
        <fullName>Phosphoprotein</fullName>
        <shortName>Protein P</shortName>
    </recommendedName>
</protein>
<dbReference type="EMBL" id="Y00114">
    <property type="protein sequence ID" value="CAA68294.1"/>
    <property type="molecule type" value="Genomic_RNA"/>
</dbReference>
<dbReference type="EMBL" id="D84095">
    <property type="protein sequence ID" value="BAA12214.1"/>
    <property type="molecule type" value="Genomic_RNA"/>
</dbReference>
<dbReference type="SMR" id="P06163"/>
<dbReference type="Proteomes" id="UP000133413">
    <property type="component" value="Genome"/>
</dbReference>
<dbReference type="GO" id="GO:0003723">
    <property type="term" value="F:RNA binding"/>
    <property type="evidence" value="ECO:0007669"/>
    <property type="project" value="InterPro"/>
</dbReference>
<dbReference type="GO" id="GO:0003968">
    <property type="term" value="F:RNA-directed RNA polymerase activity"/>
    <property type="evidence" value="ECO:0007669"/>
    <property type="project" value="InterPro"/>
</dbReference>
<dbReference type="GO" id="GO:0006351">
    <property type="term" value="P:DNA-templated transcription"/>
    <property type="evidence" value="ECO:0007669"/>
    <property type="project" value="InterPro"/>
</dbReference>
<dbReference type="GO" id="GO:0019079">
    <property type="term" value="P:viral genome replication"/>
    <property type="evidence" value="ECO:0007669"/>
    <property type="project" value="InterPro"/>
</dbReference>
<dbReference type="Gene3D" id="1.10.8.10">
    <property type="entry name" value="DNA helicase RuvA subunit, C-terminal domain"/>
    <property type="match status" value="1"/>
</dbReference>
<dbReference type="InterPro" id="IPR002693">
    <property type="entry name" value="Paramyxo_PProtein_C"/>
</dbReference>
<dbReference type="InterPro" id="IPR016075">
    <property type="entry name" value="RNA_pol_Pprot-P_XD_paramyxovir"/>
</dbReference>
<dbReference type="Pfam" id="PF01806">
    <property type="entry name" value="Paramyxo_P"/>
    <property type="match status" value="1"/>
</dbReference>
<dbReference type="SUPFAM" id="SSF58034">
    <property type="entry name" value="Multimerization domain of the phosphoprotein from sendai virus"/>
    <property type="match status" value="1"/>
</dbReference>
<dbReference type="SUPFAM" id="SSF101089">
    <property type="entry name" value="Phosphoprotein XD domain"/>
    <property type="match status" value="1"/>
</dbReference>
<accession>P06163</accession>
<feature type="chain" id="PRO_0000142705" description="Phosphoprotein">
    <location>
        <begin position="1"/>
        <end position="596"/>
    </location>
</feature>
<feature type="region of interest" description="Disordered" evidence="5">
    <location>
        <begin position="1"/>
        <end position="25"/>
    </location>
</feature>
<feature type="region of interest" description="N0 binding" evidence="1">
    <location>
        <begin position="33"/>
        <end position="41"/>
    </location>
</feature>
<feature type="region of interest" description="Disordered" evidence="5">
    <location>
        <begin position="38"/>
        <end position="196"/>
    </location>
</feature>
<feature type="region of interest" description="Disordered" evidence="5">
    <location>
        <begin position="220"/>
        <end position="352"/>
    </location>
</feature>
<feature type="region of interest" description="Multimerization" evidence="2">
    <location>
        <begin position="374"/>
        <end position="441"/>
    </location>
</feature>
<feature type="region of interest" description="L protein binding" evidence="1">
    <location>
        <begin position="442"/>
        <end position="475"/>
    </location>
</feature>
<feature type="coiled-coil region" evidence="4">
    <location>
        <begin position="416"/>
        <end position="436"/>
    </location>
</feature>
<feature type="compositionally biased region" description="Polar residues" evidence="5">
    <location>
        <begin position="1"/>
        <end position="11"/>
    </location>
</feature>
<feature type="compositionally biased region" description="Polar residues" evidence="5">
    <location>
        <begin position="38"/>
        <end position="66"/>
    </location>
</feature>
<feature type="compositionally biased region" description="Polar residues" evidence="5">
    <location>
        <begin position="74"/>
        <end position="85"/>
    </location>
</feature>
<feature type="compositionally biased region" description="Basic and acidic residues" evidence="5">
    <location>
        <begin position="88"/>
        <end position="97"/>
    </location>
</feature>
<feature type="compositionally biased region" description="Polar residues" evidence="5">
    <location>
        <begin position="127"/>
        <end position="144"/>
    </location>
</feature>
<feature type="compositionally biased region" description="Basic and acidic residues" evidence="5">
    <location>
        <begin position="151"/>
        <end position="168"/>
    </location>
</feature>
<feature type="compositionally biased region" description="Basic and acidic residues" evidence="5">
    <location>
        <begin position="233"/>
        <end position="249"/>
    </location>
</feature>
<feature type="compositionally biased region" description="Polar residues" evidence="5">
    <location>
        <begin position="270"/>
        <end position="324"/>
    </location>
</feature>
<feature type="compositionally biased region" description="Basic and acidic residues" evidence="5">
    <location>
        <begin position="331"/>
        <end position="352"/>
    </location>
</feature>
<comment type="function">
    <text evidence="2 3">Essential cofactor of the RNA polymerase L that plays a central role in the transcription and replication by forming the polymerase complex with RNA polymerase L and recruiting L to the genomic N-RNA template for RNA synthesis. Also plays a central role in the encapsidation of nascent RNA chains by forming the encapsidation complex with the nucleocapsid protein N (N-P complex). Acts as a chaperone for newly synthesized free N protein, so-called N0, allowing encapsidation of nascent RNA chains during replication (By similarity). The nucleoprotein protein N prevents excessive phosphorylation of P, which leads to down-regulation of viral transcription/ replication. Participates, together with N, in the formation of viral factories (viroplasms), which are large inclusions in the host cytoplasm where replication takes place (By similarity). Recruits host PI4KB and remodel the host endoplasmic reticulum membrane to form viral replication factories (By similarity).</text>
</comment>
<comment type="subunit">
    <text evidence="1">Homotetramer. Interacts (via multimerization domain) with polymerase L; this interaction forms the polymerase complex. Interacts (via N-terminus) with N0; this interaction allows P to chaperon N0 before encapsidation and form the N-P complex. Interacts (via C-terminus) with N-RNA template; this interaction positions the polymerase on the template.</text>
</comment>
<comment type="domain">
    <text evidence="1 2">The N-terminus consists of a long intrinsically disordered tail (By similarity). The central part contains the coiled-coil multimerization domain (PMD). Forms a four-stranded coiled coil structure. The C-terminus constitutes the alpha-helical domain that binds to the nucleocapsid (N-RNA complex) (By similarity).</text>
</comment>
<comment type="RNA editing" locationType="Undetermined">
    <text evidence="6">Partially edited. RNA editing consists of an insertion of one to six guanine nucleotides. The sequence displayed here is the P protein, derived from the unedited RNA. The edited RNA versions give rise to the V protein and the D protein depending on the number of inserted nucleotides.</text>
</comment>
<comment type="similarity">
    <text evidence="7">Belongs to the respirovirus P protein family.</text>
</comment>
<proteinExistence type="inferred from homology"/>
<gene>
    <name type="primary">P/V/D</name>
</gene>
<reference key="1">
    <citation type="journal article" date="1987" name="Nucleic Acids Res.">
        <title>Nucleotide sequence of the bovine parainfluenza 3 virus genome: its 3' end and the genes of NP, P, C and M proteins.</title>
        <authorList>
            <person name="Sakai Y."/>
            <person name="Suzu S."/>
            <person name="Shioda T."/>
            <person name="Shibuta H."/>
        </authorList>
    </citation>
    <scope>NUCLEOTIDE SEQUENCE [GENOMIC RNA]</scope>
    <source>
        <strain>910N</strain>
    </source>
</reference>
<reference key="2">
    <citation type="journal article" date="1991" name="EMBO J.">
        <title>The P gene of bovine parainfluenza virus 3 expresses all three reading frames from a single mRNA editing site.</title>
        <authorList>
            <person name="Pelet T."/>
            <person name="Curran J."/>
            <person name="Kolakofsky D."/>
        </authorList>
    </citation>
    <scope>RNA EDITING</scope>
</reference>